<gene>
    <name type="primary">hflC</name>
    <name type="ordered locus">VP2814</name>
</gene>
<evidence type="ECO:0000250" key="1"/>
<evidence type="ECO:0000255" key="2"/>
<evidence type="ECO:0000305" key="3"/>
<feature type="chain" id="PRO_0000094080" description="Protein HflC">
    <location>
        <begin position="1"/>
        <end position="326"/>
    </location>
</feature>
<feature type="transmembrane region" description="Helical" evidence="2">
    <location>
        <begin position="4"/>
        <end position="24"/>
    </location>
</feature>
<organism>
    <name type="scientific">Vibrio parahaemolyticus serotype O3:K6 (strain RIMD 2210633)</name>
    <dbReference type="NCBI Taxonomy" id="223926"/>
    <lineage>
        <taxon>Bacteria</taxon>
        <taxon>Pseudomonadati</taxon>
        <taxon>Pseudomonadota</taxon>
        <taxon>Gammaproteobacteria</taxon>
        <taxon>Vibrionales</taxon>
        <taxon>Vibrionaceae</taxon>
        <taxon>Vibrio</taxon>
    </lineage>
</organism>
<reference key="1">
    <citation type="submission" date="1994-04" db="EMBL/GenBank/DDBJ databases">
        <authorList>
            <person name="McCarter L.L."/>
        </authorList>
    </citation>
    <scope>NUCLEOTIDE SEQUENCE [GENOMIC DNA]</scope>
    <source>
        <strain>BB22</strain>
    </source>
</reference>
<reference key="2">
    <citation type="journal article" date="2003" name="Lancet">
        <title>Genome sequence of Vibrio parahaemolyticus: a pathogenic mechanism distinct from that of V. cholerae.</title>
        <authorList>
            <person name="Makino K."/>
            <person name="Oshima K."/>
            <person name="Kurokawa K."/>
            <person name="Yokoyama K."/>
            <person name="Uda T."/>
            <person name="Tagomori K."/>
            <person name="Iijima Y."/>
            <person name="Najima M."/>
            <person name="Nakano M."/>
            <person name="Yamashita A."/>
            <person name="Kubota Y."/>
            <person name="Kimura S."/>
            <person name="Yasunaga T."/>
            <person name="Honda T."/>
            <person name="Shinagawa H."/>
            <person name="Hattori M."/>
            <person name="Iida T."/>
        </authorList>
    </citation>
    <scope>NUCLEOTIDE SEQUENCE [LARGE SCALE GENOMIC DNA]</scope>
    <source>
        <strain>RIMD 2210633</strain>
    </source>
</reference>
<protein>
    <recommendedName>
        <fullName>Protein HflC</fullName>
    </recommendedName>
</protein>
<accession>P40606</accession>
<name>HFLC_VIBPA</name>
<keyword id="KW-0472">Membrane</keyword>
<keyword id="KW-0812">Transmembrane</keyword>
<keyword id="KW-1133">Transmembrane helix</keyword>
<comment type="function">
    <text evidence="1">HflC and HflK could regulate a protease.</text>
</comment>
<comment type="subunit">
    <text evidence="1">HflC and HflK may interact to form a multimeric complex.</text>
</comment>
<comment type="subcellular location">
    <subcellularLocation>
        <location evidence="3">Membrane</location>
        <topology evidence="3">Single-pass membrane protein</topology>
    </subcellularLocation>
</comment>
<comment type="similarity">
    <text evidence="3">Belongs to the band 7/mec-2 family. HflC subfamily.</text>
</comment>
<proteinExistence type="inferred from homology"/>
<dbReference type="EMBL" id="U09005">
    <property type="protein sequence ID" value="AAA62187.1"/>
    <property type="molecule type" value="Genomic_DNA"/>
</dbReference>
<dbReference type="EMBL" id="BA000031">
    <property type="protein sequence ID" value="BAC61077.1"/>
    <property type="molecule type" value="Genomic_DNA"/>
</dbReference>
<dbReference type="RefSeq" id="NP_799193.1">
    <property type="nucleotide sequence ID" value="NC_004603.1"/>
</dbReference>
<dbReference type="RefSeq" id="WP_005460668.1">
    <property type="nucleotide sequence ID" value="NC_004603.1"/>
</dbReference>
<dbReference type="SMR" id="P40606"/>
<dbReference type="MEROPS" id="I87.001"/>
<dbReference type="GeneID" id="1190364"/>
<dbReference type="KEGG" id="vpa:VP2814"/>
<dbReference type="PATRIC" id="fig|223926.6.peg.2705"/>
<dbReference type="eggNOG" id="COG0330">
    <property type="taxonomic scope" value="Bacteria"/>
</dbReference>
<dbReference type="HOGENOM" id="CLU_059167_3_0_6"/>
<dbReference type="Proteomes" id="UP000002493">
    <property type="component" value="Chromosome 1"/>
</dbReference>
<dbReference type="GO" id="GO:0016020">
    <property type="term" value="C:membrane"/>
    <property type="evidence" value="ECO:0007669"/>
    <property type="project" value="UniProtKB-SubCell"/>
</dbReference>
<dbReference type="CDD" id="cd03405">
    <property type="entry name" value="SPFH_HflC"/>
    <property type="match status" value="1"/>
</dbReference>
<dbReference type="Gene3D" id="3.30.479.30">
    <property type="entry name" value="Band 7 domain"/>
    <property type="match status" value="1"/>
</dbReference>
<dbReference type="InterPro" id="IPR001107">
    <property type="entry name" value="Band_7"/>
</dbReference>
<dbReference type="InterPro" id="IPR036013">
    <property type="entry name" value="Band_7/SPFH_dom_sf"/>
</dbReference>
<dbReference type="InterPro" id="IPR010200">
    <property type="entry name" value="HflC"/>
</dbReference>
<dbReference type="NCBIfam" id="TIGR01932">
    <property type="entry name" value="hflC"/>
    <property type="match status" value="1"/>
</dbReference>
<dbReference type="PANTHER" id="PTHR42911">
    <property type="entry name" value="MODULATOR OF FTSH PROTEASE HFLC"/>
    <property type="match status" value="1"/>
</dbReference>
<dbReference type="PANTHER" id="PTHR42911:SF1">
    <property type="entry name" value="MODULATOR OF FTSH PROTEASE HFLC"/>
    <property type="match status" value="1"/>
</dbReference>
<dbReference type="Pfam" id="PF01145">
    <property type="entry name" value="Band_7"/>
    <property type="match status" value="1"/>
</dbReference>
<dbReference type="PIRSF" id="PIRSF005651">
    <property type="entry name" value="HflC"/>
    <property type="match status" value="1"/>
</dbReference>
<dbReference type="SMART" id="SM00244">
    <property type="entry name" value="PHB"/>
    <property type="match status" value="1"/>
</dbReference>
<dbReference type="SUPFAM" id="SSF117892">
    <property type="entry name" value="Band 7/SPFH domain"/>
    <property type="match status" value="1"/>
</dbReference>
<sequence>MRKLMIPVLVIALALMLMSLFVIPEGERGIVVRFGRVLKDNNDITRIYEPGLHFKMPLFDRVKQLDARIQTMDGRADRFVTSEKKDVIIDSYVKWRIEDFGRYYLATGGGNSLTAEALLERKVTDVLRSEIGAREIKQIVSGPRNDDVLPEDASSDEVNTEAAREALEIDGERDLIMSDVLRDTRESAMKDLGVRVVDFRMKKINLPDEISESIYRRMRAERESVARKHRSQGREKAEIIRAQAELEVATILAEADKTARVTRGEADAEAAKIYANAYNKDPEFFSFLRSLRAYEKSFSSKNDILVLDPKSDFFQYMNNAKGAKAE</sequence>